<reference key="1">
    <citation type="journal article" date="1984" name="Eur. J. Biochem.">
        <title>The amino acid sequence of sarcoplasmic calcium-binding protein obtained from sandworm, Perinereis vancaurica tetradentata.</title>
        <authorList>
            <person name="Kobayashi T."/>
            <person name="Takasaki Y."/>
            <person name="Tagaki T."/>
            <person name="Konishi K."/>
        </authorList>
    </citation>
    <scope>PROTEIN SEQUENCE</scope>
    <scope>ACETYLATION AT SER-1</scope>
</reference>
<protein>
    <recommendedName>
        <fullName>Sarcoplasmic calcium-binding protein</fullName>
        <shortName>SCP</shortName>
    </recommendedName>
</protein>
<accession>P04572</accession>
<name>SCP_PERVT</name>
<evidence type="ECO:0000255" key="1">
    <source>
        <dbReference type="PROSITE-ProRule" id="PRU00448"/>
    </source>
</evidence>
<evidence type="ECO:0000269" key="2">
    <source>
    </source>
</evidence>
<keyword id="KW-0007">Acetylation</keyword>
<keyword id="KW-0106">Calcium</keyword>
<keyword id="KW-0903">Direct protein sequencing</keyword>
<keyword id="KW-0479">Metal-binding</keyword>
<keyword id="KW-0514">Muscle protein</keyword>
<keyword id="KW-0677">Repeat</keyword>
<organism>
    <name type="scientific">Perinereis vancaurica tetradentata</name>
    <name type="common">Sandworm</name>
    <dbReference type="NCBI Taxonomy" id="6357"/>
    <lineage>
        <taxon>Eukaryota</taxon>
        <taxon>Metazoa</taxon>
        <taxon>Spiralia</taxon>
        <taxon>Lophotrochozoa</taxon>
        <taxon>Annelida</taxon>
        <taxon>Polychaeta</taxon>
        <taxon>Errantia</taxon>
        <taxon>Phyllodocida</taxon>
        <taxon>Nereididae</taxon>
        <taxon>Perinereis</taxon>
    </lineage>
</organism>
<proteinExistence type="evidence at protein level"/>
<sequence length="174" mass="19525">SDLWVQKMKTYFNRIDFDKDGAITRKDFESMATRFAKESEMKPEHAKVLMDSLTGVWDKFLANVAGGKGIDQATFISSMKEKVKDPNAKAVVEGPLPLFFRAVDTNEDNMISRDEYGIFFNMLGLNPDMAPASFDAIDTNNDGLLSQEEFVTAGSDFFINDQDSPNKVFWGPLV</sequence>
<dbReference type="PIR" id="S07228">
    <property type="entry name" value="S07228"/>
</dbReference>
<dbReference type="SMR" id="P04572"/>
<dbReference type="iPTMnet" id="P04572"/>
<dbReference type="GO" id="GO:0005509">
    <property type="term" value="F:calcium ion binding"/>
    <property type="evidence" value="ECO:0007669"/>
    <property type="project" value="InterPro"/>
</dbReference>
<dbReference type="Gene3D" id="1.10.238.10">
    <property type="entry name" value="EF-hand"/>
    <property type="match status" value="1"/>
</dbReference>
<dbReference type="InterPro" id="IPR011992">
    <property type="entry name" value="EF-hand-dom_pair"/>
</dbReference>
<dbReference type="InterPro" id="IPR018247">
    <property type="entry name" value="EF_Hand_1_Ca_BS"/>
</dbReference>
<dbReference type="InterPro" id="IPR002048">
    <property type="entry name" value="EF_hand_dom"/>
</dbReference>
<dbReference type="Pfam" id="PF13202">
    <property type="entry name" value="EF-hand_5"/>
    <property type="match status" value="3"/>
</dbReference>
<dbReference type="SMART" id="SM00054">
    <property type="entry name" value="EFh"/>
    <property type="match status" value="3"/>
</dbReference>
<dbReference type="SUPFAM" id="SSF47473">
    <property type="entry name" value="EF-hand"/>
    <property type="match status" value="1"/>
</dbReference>
<dbReference type="PROSITE" id="PS00018">
    <property type="entry name" value="EF_HAND_1"/>
    <property type="match status" value="3"/>
</dbReference>
<dbReference type="PROSITE" id="PS50222">
    <property type="entry name" value="EF_HAND_2"/>
    <property type="match status" value="3"/>
</dbReference>
<feature type="chain" id="PRO_0000073630" description="Sarcoplasmic calcium-binding protein">
    <location>
        <begin position="1"/>
        <end position="174"/>
    </location>
</feature>
<feature type="domain" description="EF-hand 1" evidence="1">
    <location>
        <begin position="3"/>
        <end position="38"/>
    </location>
</feature>
<feature type="domain" description="EF-hand 2" evidence="1">
    <location>
        <begin position="55"/>
        <end position="90"/>
    </location>
</feature>
<feature type="domain" description="EF-hand 3" evidence="1">
    <location>
        <begin position="91"/>
        <end position="126"/>
    </location>
</feature>
<feature type="domain" description="EF-hand 4" evidence="1">
    <location>
        <begin position="125"/>
        <end position="160"/>
    </location>
</feature>
<feature type="binding site" evidence="1">
    <location>
        <position position="16"/>
    </location>
    <ligand>
        <name>Ca(2+)</name>
        <dbReference type="ChEBI" id="CHEBI:29108"/>
        <label>1</label>
    </ligand>
</feature>
<feature type="binding site" evidence="1">
    <location>
        <position position="18"/>
    </location>
    <ligand>
        <name>Ca(2+)</name>
        <dbReference type="ChEBI" id="CHEBI:29108"/>
        <label>1</label>
    </ligand>
</feature>
<feature type="binding site" evidence="1">
    <location>
        <position position="20"/>
    </location>
    <ligand>
        <name>Ca(2+)</name>
        <dbReference type="ChEBI" id="CHEBI:29108"/>
        <label>1</label>
    </ligand>
</feature>
<feature type="binding site" evidence="1">
    <location>
        <position position="27"/>
    </location>
    <ligand>
        <name>Ca(2+)</name>
        <dbReference type="ChEBI" id="CHEBI:29108"/>
        <label>1</label>
    </ligand>
</feature>
<feature type="binding site" evidence="1">
    <location>
        <position position="104"/>
    </location>
    <ligand>
        <name>Ca(2+)</name>
        <dbReference type="ChEBI" id="CHEBI:29108"/>
        <label>2</label>
    </ligand>
</feature>
<feature type="binding site" evidence="1">
    <location>
        <position position="106"/>
    </location>
    <ligand>
        <name>Ca(2+)</name>
        <dbReference type="ChEBI" id="CHEBI:29108"/>
        <label>2</label>
    </ligand>
</feature>
<feature type="binding site" evidence="1">
    <location>
        <position position="108"/>
    </location>
    <ligand>
        <name>Ca(2+)</name>
        <dbReference type="ChEBI" id="CHEBI:29108"/>
        <label>2</label>
    </ligand>
</feature>
<feature type="binding site" evidence="1">
    <location>
        <position position="110"/>
    </location>
    <ligand>
        <name>Ca(2+)</name>
        <dbReference type="ChEBI" id="CHEBI:29108"/>
        <label>2</label>
    </ligand>
</feature>
<feature type="binding site" evidence="1">
    <location>
        <position position="115"/>
    </location>
    <ligand>
        <name>Ca(2+)</name>
        <dbReference type="ChEBI" id="CHEBI:29108"/>
        <label>2</label>
    </ligand>
</feature>
<feature type="binding site" evidence="1">
    <location>
        <position position="138"/>
    </location>
    <ligand>
        <name>Ca(2+)</name>
        <dbReference type="ChEBI" id="CHEBI:29108"/>
        <label>3</label>
    </ligand>
</feature>
<feature type="binding site" evidence="1">
    <location>
        <position position="140"/>
    </location>
    <ligand>
        <name>Ca(2+)</name>
        <dbReference type="ChEBI" id="CHEBI:29108"/>
        <label>3</label>
    </ligand>
</feature>
<feature type="binding site" evidence="1">
    <location>
        <position position="142"/>
    </location>
    <ligand>
        <name>Ca(2+)</name>
        <dbReference type="ChEBI" id="CHEBI:29108"/>
        <label>3</label>
    </ligand>
</feature>
<feature type="binding site" evidence="1">
    <location>
        <position position="149"/>
    </location>
    <ligand>
        <name>Ca(2+)</name>
        <dbReference type="ChEBI" id="CHEBI:29108"/>
        <label>3</label>
    </ligand>
</feature>
<feature type="modified residue" description="N-acetylserine" evidence="2">
    <location>
        <position position="1"/>
    </location>
</feature>
<comment type="function">
    <text>Like parvalbumins, SCPs seem to be more abundant in fast contracting muscles, but no functional relationship can be established from this distribution.</text>
</comment>
<comment type="miscellaneous">
    <text>The sarcoplasmic calcium-binding proteins are abundant in the muscle of arthropods, mollusks, annelids, and protochordates.</text>
</comment>
<comment type="miscellaneous">
    <text>This protein has three functional calcium-binding sites; potential site 2 has lost affinity for calcium.</text>
</comment>